<keyword id="KW-0067">ATP-binding</keyword>
<keyword id="KW-0997">Cell inner membrane</keyword>
<keyword id="KW-1003">Cell membrane</keyword>
<keyword id="KW-0445">Lipid transport</keyword>
<keyword id="KW-0472">Membrane</keyword>
<keyword id="KW-0547">Nucleotide-binding</keyword>
<keyword id="KW-1185">Reference proteome</keyword>
<keyword id="KW-1278">Translocase</keyword>
<keyword id="KW-0812">Transmembrane</keyword>
<keyword id="KW-1133">Transmembrane helix</keyword>
<keyword id="KW-0813">Transport</keyword>
<name>MSBA_PECAS</name>
<feature type="chain" id="PRO_0000092580" description="ATP-dependent lipid A-core flippase">
    <location>
        <begin position="1"/>
        <end position="582"/>
    </location>
</feature>
<feature type="transmembrane region" description="Helical" evidence="1">
    <location>
        <begin position="16"/>
        <end position="36"/>
    </location>
</feature>
<feature type="transmembrane region" description="Helical" evidence="1">
    <location>
        <begin position="63"/>
        <end position="83"/>
    </location>
</feature>
<feature type="transmembrane region" description="Helical" evidence="1">
    <location>
        <begin position="153"/>
        <end position="173"/>
    </location>
</feature>
<feature type="transmembrane region" description="Helical" evidence="1">
    <location>
        <begin position="253"/>
        <end position="273"/>
    </location>
</feature>
<feature type="transmembrane region" description="Helical" evidence="1">
    <location>
        <begin position="275"/>
        <end position="295"/>
    </location>
</feature>
<feature type="domain" description="ABC transmembrane type-1" evidence="1">
    <location>
        <begin position="28"/>
        <end position="310"/>
    </location>
</feature>
<feature type="domain" description="ABC transporter" evidence="1">
    <location>
        <begin position="342"/>
        <end position="578"/>
    </location>
</feature>
<feature type="binding site" evidence="1">
    <location>
        <begin position="376"/>
        <end position="383"/>
    </location>
    <ligand>
        <name>ATP</name>
        <dbReference type="ChEBI" id="CHEBI:30616"/>
    </ligand>
</feature>
<proteinExistence type="inferred from homology"/>
<evidence type="ECO:0000255" key="1">
    <source>
        <dbReference type="HAMAP-Rule" id="MF_01703"/>
    </source>
</evidence>
<evidence type="ECO:0000305" key="2"/>
<protein>
    <recommendedName>
        <fullName evidence="1">ATP-dependent lipid A-core flippase</fullName>
        <ecNumber evidence="1">7.5.2.6</ecNumber>
    </recommendedName>
    <alternativeName>
        <fullName evidence="1">Lipid A export ATP-binding/permease protein MsbA</fullName>
    </alternativeName>
</protein>
<organism>
    <name type="scientific">Pectobacterium atrosepticum (strain SCRI 1043 / ATCC BAA-672)</name>
    <name type="common">Erwinia carotovora subsp. atroseptica</name>
    <dbReference type="NCBI Taxonomy" id="218491"/>
    <lineage>
        <taxon>Bacteria</taxon>
        <taxon>Pseudomonadati</taxon>
        <taxon>Pseudomonadota</taxon>
        <taxon>Gammaproteobacteria</taxon>
        <taxon>Enterobacterales</taxon>
        <taxon>Pectobacteriaceae</taxon>
        <taxon>Pectobacterium</taxon>
    </lineage>
</organism>
<sequence length="582" mass="64519">MLNDKDLSTWQTFRRLWPMISPFKAGLAVAAIALIINAAGDTLMLSLLKPLLDEGFGKADRSVLLWMPLVVIGLMLVRGASGFVSSYCVSWVSGKVVMNMRRRLFSHIMGMPVAFFDQQSTGTLLSRITYDSEQVAASSSGALITVVREGASIIGLFILMFYYSWQLSIILIVIAPIVSIAMRMVSKRFRSISKNMQDTMGHVTTSTEQMLKGHKEVLMFGGQDVETKRFEQVSNRMRQQGMKMVSASSISDPIIQLIASLALAFVLYAASFPSVMETLTAGTITVVFSSMIALMRPLKSLTNVNAQFQRGMAACQTLFAILDMEQERDTGKREIERAKGELEFRQVNFAYPARENLALKNINLHIPVGKTVALVGRSGSGKSTIASLITRFYDIQSGEILLDGHDLREYRLSSLRNQVALVSQNVHLFNDTIANNIAYARNENYSREEIERAAKMAYAMDFINKMEHGLDTVIGENGVMLSGGQRQRIAIARALLRDSPILILDEATSALDTESERAIQAALDELQKDRTALVIAHRLSTIEKADEILVVEDGRIIERGNHTALLATNGAYAQLHRMQFGE</sequence>
<comment type="function">
    <text evidence="1">Involved in lipopolysaccharide (LPS) biosynthesis. Translocates lipid A-core from the inner to the outer leaflet of the inner membrane. Transmembrane domains (TMD) form a pore in the inner membrane and the ATP-binding domain (NBD) is responsible for energy generation.</text>
</comment>
<comment type="catalytic activity">
    <reaction evidence="1">
        <text>ATP + H2O + lipid A-core oligosaccharideSide 1 = ADP + phosphate + lipid A-core oligosaccharideSide 2.</text>
        <dbReference type="EC" id="7.5.2.6"/>
    </reaction>
</comment>
<comment type="subunit">
    <text evidence="1">Homodimer.</text>
</comment>
<comment type="subcellular location">
    <subcellularLocation>
        <location evidence="1">Cell inner membrane</location>
        <topology evidence="1">Multi-pass membrane protein</topology>
    </subcellularLocation>
</comment>
<comment type="domain">
    <text evidence="1">In MsbA the ATP-binding domain (NBD) and the transmembrane domain (TMD) are fused.</text>
</comment>
<comment type="similarity">
    <text evidence="1">Belongs to the ABC transporter superfamily. Lipid exporter (TC 3.A.1.106) family.</text>
</comment>
<comment type="sequence caution" evidence="2">
    <conflict type="erroneous initiation">
        <sequence resource="EMBL-CDS" id="CAG75456"/>
    </conflict>
</comment>
<accession>Q6D437</accession>
<reference key="1">
    <citation type="journal article" date="2004" name="Proc. Natl. Acad. Sci. U.S.A.">
        <title>Genome sequence of the enterobacterial phytopathogen Erwinia carotovora subsp. atroseptica and characterization of virulence factors.</title>
        <authorList>
            <person name="Bell K.S."/>
            <person name="Sebaihia M."/>
            <person name="Pritchard L."/>
            <person name="Holden M.T.G."/>
            <person name="Hyman L.J."/>
            <person name="Holeva M.C."/>
            <person name="Thomson N.R."/>
            <person name="Bentley S.D."/>
            <person name="Churcher L.J.C."/>
            <person name="Mungall K."/>
            <person name="Atkin R."/>
            <person name="Bason N."/>
            <person name="Brooks K."/>
            <person name="Chillingworth T."/>
            <person name="Clark K."/>
            <person name="Doggett J."/>
            <person name="Fraser A."/>
            <person name="Hance Z."/>
            <person name="Hauser H."/>
            <person name="Jagels K."/>
            <person name="Moule S."/>
            <person name="Norbertczak H."/>
            <person name="Ormond D."/>
            <person name="Price C."/>
            <person name="Quail M.A."/>
            <person name="Sanders M."/>
            <person name="Walker D."/>
            <person name="Whitehead S."/>
            <person name="Salmond G.P.C."/>
            <person name="Birch P.R.J."/>
            <person name="Parkhill J."/>
            <person name="Toth I.K."/>
        </authorList>
    </citation>
    <scope>NUCLEOTIDE SEQUENCE [LARGE SCALE GENOMIC DNA]</scope>
    <source>
        <strain>SCRI 1043 / ATCC BAA-672</strain>
    </source>
</reference>
<gene>
    <name evidence="1" type="primary">msbA</name>
    <name type="ordered locus">ECA2557</name>
</gene>
<dbReference type="EC" id="7.5.2.6" evidence="1"/>
<dbReference type="EMBL" id="BX950851">
    <property type="protein sequence ID" value="CAG75456.1"/>
    <property type="status" value="ALT_INIT"/>
    <property type="molecule type" value="Genomic_DNA"/>
</dbReference>
<dbReference type="RefSeq" id="WP_043878172.1">
    <property type="nucleotide sequence ID" value="NC_004547.2"/>
</dbReference>
<dbReference type="SMR" id="Q6D437"/>
<dbReference type="STRING" id="218491.ECA2557"/>
<dbReference type="KEGG" id="eca:ECA2557"/>
<dbReference type="PATRIC" id="fig|218491.5.peg.2592"/>
<dbReference type="eggNOG" id="COG1132">
    <property type="taxonomic scope" value="Bacteria"/>
</dbReference>
<dbReference type="HOGENOM" id="CLU_000604_84_3_6"/>
<dbReference type="OrthoDB" id="9806127at2"/>
<dbReference type="Proteomes" id="UP000007966">
    <property type="component" value="Chromosome"/>
</dbReference>
<dbReference type="GO" id="GO:0005886">
    <property type="term" value="C:plasma membrane"/>
    <property type="evidence" value="ECO:0007669"/>
    <property type="project" value="UniProtKB-SubCell"/>
</dbReference>
<dbReference type="GO" id="GO:0015421">
    <property type="term" value="F:ABC-type oligopeptide transporter activity"/>
    <property type="evidence" value="ECO:0007669"/>
    <property type="project" value="TreeGrafter"/>
</dbReference>
<dbReference type="GO" id="GO:0005524">
    <property type="term" value="F:ATP binding"/>
    <property type="evidence" value="ECO:0007669"/>
    <property type="project" value="UniProtKB-KW"/>
</dbReference>
<dbReference type="GO" id="GO:0016887">
    <property type="term" value="F:ATP hydrolysis activity"/>
    <property type="evidence" value="ECO:0007669"/>
    <property type="project" value="InterPro"/>
</dbReference>
<dbReference type="GO" id="GO:0034040">
    <property type="term" value="F:ATPase-coupled lipid transmembrane transporter activity"/>
    <property type="evidence" value="ECO:0007669"/>
    <property type="project" value="InterPro"/>
</dbReference>
<dbReference type="CDD" id="cd18552">
    <property type="entry name" value="ABC_6TM_MsbA_like"/>
    <property type="match status" value="1"/>
</dbReference>
<dbReference type="CDD" id="cd03251">
    <property type="entry name" value="ABCC_MsbA"/>
    <property type="match status" value="1"/>
</dbReference>
<dbReference type="FunFam" id="1.20.1560.10:FF:000008">
    <property type="entry name" value="Lipid A export ATP-binding/permease protein MsbA"/>
    <property type="match status" value="1"/>
</dbReference>
<dbReference type="FunFam" id="3.40.50.300:FF:000140">
    <property type="entry name" value="Lipid A export ATP-binding/permease protein MsbA"/>
    <property type="match status" value="1"/>
</dbReference>
<dbReference type="Gene3D" id="1.20.1560.10">
    <property type="entry name" value="ABC transporter type 1, transmembrane domain"/>
    <property type="match status" value="1"/>
</dbReference>
<dbReference type="Gene3D" id="3.40.50.300">
    <property type="entry name" value="P-loop containing nucleotide triphosphate hydrolases"/>
    <property type="match status" value="1"/>
</dbReference>
<dbReference type="InterPro" id="IPR003593">
    <property type="entry name" value="AAA+_ATPase"/>
</dbReference>
<dbReference type="InterPro" id="IPR011527">
    <property type="entry name" value="ABC1_TM_dom"/>
</dbReference>
<dbReference type="InterPro" id="IPR036640">
    <property type="entry name" value="ABC1_TM_sf"/>
</dbReference>
<dbReference type="InterPro" id="IPR003439">
    <property type="entry name" value="ABC_transporter-like_ATP-bd"/>
</dbReference>
<dbReference type="InterPro" id="IPR017871">
    <property type="entry name" value="ABC_transporter-like_CS"/>
</dbReference>
<dbReference type="InterPro" id="IPR011917">
    <property type="entry name" value="ABC_transpr_lipidA"/>
</dbReference>
<dbReference type="InterPro" id="IPR027417">
    <property type="entry name" value="P-loop_NTPase"/>
</dbReference>
<dbReference type="InterPro" id="IPR039421">
    <property type="entry name" value="Type_1_exporter"/>
</dbReference>
<dbReference type="NCBIfam" id="TIGR02203">
    <property type="entry name" value="MsbA_lipidA"/>
    <property type="match status" value="1"/>
</dbReference>
<dbReference type="NCBIfam" id="NF008381">
    <property type="entry name" value="PRK11176.1"/>
    <property type="match status" value="1"/>
</dbReference>
<dbReference type="PANTHER" id="PTHR43394:SF1">
    <property type="entry name" value="ATP-BINDING CASSETTE SUB-FAMILY B MEMBER 10, MITOCHONDRIAL"/>
    <property type="match status" value="1"/>
</dbReference>
<dbReference type="PANTHER" id="PTHR43394">
    <property type="entry name" value="ATP-DEPENDENT PERMEASE MDL1, MITOCHONDRIAL"/>
    <property type="match status" value="1"/>
</dbReference>
<dbReference type="Pfam" id="PF00664">
    <property type="entry name" value="ABC_membrane"/>
    <property type="match status" value="1"/>
</dbReference>
<dbReference type="Pfam" id="PF00005">
    <property type="entry name" value="ABC_tran"/>
    <property type="match status" value="1"/>
</dbReference>
<dbReference type="SMART" id="SM00382">
    <property type="entry name" value="AAA"/>
    <property type="match status" value="1"/>
</dbReference>
<dbReference type="SUPFAM" id="SSF90123">
    <property type="entry name" value="ABC transporter transmembrane region"/>
    <property type="match status" value="1"/>
</dbReference>
<dbReference type="SUPFAM" id="SSF52540">
    <property type="entry name" value="P-loop containing nucleoside triphosphate hydrolases"/>
    <property type="match status" value="1"/>
</dbReference>
<dbReference type="PROSITE" id="PS50929">
    <property type="entry name" value="ABC_TM1F"/>
    <property type="match status" value="1"/>
</dbReference>
<dbReference type="PROSITE" id="PS00211">
    <property type="entry name" value="ABC_TRANSPORTER_1"/>
    <property type="match status" value="1"/>
</dbReference>
<dbReference type="PROSITE" id="PS50893">
    <property type="entry name" value="ABC_TRANSPORTER_2"/>
    <property type="match status" value="1"/>
</dbReference>
<dbReference type="PROSITE" id="PS51239">
    <property type="entry name" value="MSBA"/>
    <property type="match status" value="1"/>
</dbReference>